<proteinExistence type="inferred from homology"/>
<dbReference type="EC" id="4.2.1.11" evidence="1"/>
<dbReference type="EMBL" id="U61534">
    <property type="protein sequence ID" value="AAB39979.1"/>
    <property type="molecule type" value="Genomic_DNA"/>
</dbReference>
<dbReference type="EMBL" id="AE000520">
    <property type="protein sequence ID" value="AAC65781.1"/>
    <property type="molecule type" value="Genomic_DNA"/>
</dbReference>
<dbReference type="PIR" id="F71278">
    <property type="entry name" value="F71278"/>
</dbReference>
<dbReference type="RefSeq" id="WP_010882261.1">
    <property type="nucleotide sequence ID" value="NC_021490.2"/>
</dbReference>
<dbReference type="SMR" id="P74934"/>
<dbReference type="STRING" id="243276.TP_0817"/>
<dbReference type="EnsemblBacteria" id="AAC65781">
    <property type="protein sequence ID" value="AAC65781"/>
    <property type="gene ID" value="TP_0817"/>
</dbReference>
<dbReference type="GeneID" id="93876576"/>
<dbReference type="KEGG" id="tpa:TP_0817"/>
<dbReference type="KEGG" id="tpw:TPANIC_0817"/>
<dbReference type="eggNOG" id="COG0148">
    <property type="taxonomic scope" value="Bacteria"/>
</dbReference>
<dbReference type="HOGENOM" id="CLU_031223_2_1_12"/>
<dbReference type="OrthoDB" id="9804716at2"/>
<dbReference type="UniPathway" id="UPA00109">
    <property type="reaction ID" value="UER00187"/>
</dbReference>
<dbReference type="Proteomes" id="UP000000811">
    <property type="component" value="Chromosome"/>
</dbReference>
<dbReference type="GO" id="GO:0009986">
    <property type="term" value="C:cell surface"/>
    <property type="evidence" value="ECO:0007669"/>
    <property type="project" value="UniProtKB-SubCell"/>
</dbReference>
<dbReference type="GO" id="GO:0005576">
    <property type="term" value="C:extracellular region"/>
    <property type="evidence" value="ECO:0007669"/>
    <property type="project" value="UniProtKB-SubCell"/>
</dbReference>
<dbReference type="GO" id="GO:0000015">
    <property type="term" value="C:phosphopyruvate hydratase complex"/>
    <property type="evidence" value="ECO:0007669"/>
    <property type="project" value="InterPro"/>
</dbReference>
<dbReference type="GO" id="GO:0000287">
    <property type="term" value="F:magnesium ion binding"/>
    <property type="evidence" value="ECO:0007669"/>
    <property type="project" value="UniProtKB-UniRule"/>
</dbReference>
<dbReference type="GO" id="GO:0004634">
    <property type="term" value="F:phosphopyruvate hydratase activity"/>
    <property type="evidence" value="ECO:0007669"/>
    <property type="project" value="UniProtKB-UniRule"/>
</dbReference>
<dbReference type="GO" id="GO:0006096">
    <property type="term" value="P:glycolytic process"/>
    <property type="evidence" value="ECO:0007669"/>
    <property type="project" value="UniProtKB-UniRule"/>
</dbReference>
<dbReference type="CDD" id="cd03313">
    <property type="entry name" value="enolase"/>
    <property type="match status" value="1"/>
</dbReference>
<dbReference type="FunFam" id="3.20.20.120:FF:000001">
    <property type="entry name" value="Enolase"/>
    <property type="match status" value="1"/>
</dbReference>
<dbReference type="FunFam" id="3.30.390.10:FF:000001">
    <property type="entry name" value="Enolase"/>
    <property type="match status" value="1"/>
</dbReference>
<dbReference type="Gene3D" id="3.20.20.120">
    <property type="entry name" value="Enolase-like C-terminal domain"/>
    <property type="match status" value="1"/>
</dbReference>
<dbReference type="Gene3D" id="3.30.390.10">
    <property type="entry name" value="Enolase-like, N-terminal domain"/>
    <property type="match status" value="1"/>
</dbReference>
<dbReference type="HAMAP" id="MF_00318">
    <property type="entry name" value="Enolase"/>
    <property type="match status" value="1"/>
</dbReference>
<dbReference type="InterPro" id="IPR000941">
    <property type="entry name" value="Enolase"/>
</dbReference>
<dbReference type="InterPro" id="IPR036849">
    <property type="entry name" value="Enolase-like_C_sf"/>
</dbReference>
<dbReference type="InterPro" id="IPR029017">
    <property type="entry name" value="Enolase-like_N"/>
</dbReference>
<dbReference type="InterPro" id="IPR020810">
    <property type="entry name" value="Enolase_C"/>
</dbReference>
<dbReference type="InterPro" id="IPR020809">
    <property type="entry name" value="Enolase_CS"/>
</dbReference>
<dbReference type="InterPro" id="IPR020811">
    <property type="entry name" value="Enolase_N"/>
</dbReference>
<dbReference type="NCBIfam" id="TIGR01060">
    <property type="entry name" value="eno"/>
    <property type="match status" value="1"/>
</dbReference>
<dbReference type="PANTHER" id="PTHR11902">
    <property type="entry name" value="ENOLASE"/>
    <property type="match status" value="1"/>
</dbReference>
<dbReference type="PANTHER" id="PTHR11902:SF1">
    <property type="entry name" value="ENOLASE"/>
    <property type="match status" value="1"/>
</dbReference>
<dbReference type="Pfam" id="PF00113">
    <property type="entry name" value="Enolase_C"/>
    <property type="match status" value="1"/>
</dbReference>
<dbReference type="Pfam" id="PF03952">
    <property type="entry name" value="Enolase_N"/>
    <property type="match status" value="1"/>
</dbReference>
<dbReference type="PIRSF" id="PIRSF001400">
    <property type="entry name" value="Enolase"/>
    <property type="match status" value="1"/>
</dbReference>
<dbReference type="PRINTS" id="PR00148">
    <property type="entry name" value="ENOLASE"/>
</dbReference>
<dbReference type="SFLD" id="SFLDF00002">
    <property type="entry name" value="enolase"/>
    <property type="match status" value="1"/>
</dbReference>
<dbReference type="SFLD" id="SFLDG00178">
    <property type="entry name" value="enolase"/>
    <property type="match status" value="1"/>
</dbReference>
<dbReference type="SMART" id="SM01192">
    <property type="entry name" value="Enolase_C"/>
    <property type="match status" value="1"/>
</dbReference>
<dbReference type="SMART" id="SM01193">
    <property type="entry name" value="Enolase_N"/>
    <property type="match status" value="1"/>
</dbReference>
<dbReference type="SUPFAM" id="SSF51604">
    <property type="entry name" value="Enolase C-terminal domain-like"/>
    <property type="match status" value="1"/>
</dbReference>
<dbReference type="SUPFAM" id="SSF54826">
    <property type="entry name" value="Enolase N-terminal domain-like"/>
    <property type="match status" value="1"/>
</dbReference>
<dbReference type="PROSITE" id="PS00164">
    <property type="entry name" value="ENOLASE"/>
    <property type="match status" value="1"/>
</dbReference>
<comment type="function">
    <text evidence="1">Catalyzes the reversible conversion of 2-phosphoglycerate (2-PG) into phosphoenolpyruvate (PEP). It is essential for the degradation of carbohydrates via glycolysis.</text>
</comment>
<comment type="catalytic activity">
    <reaction evidence="1">
        <text>(2R)-2-phosphoglycerate = phosphoenolpyruvate + H2O</text>
        <dbReference type="Rhea" id="RHEA:10164"/>
        <dbReference type="ChEBI" id="CHEBI:15377"/>
        <dbReference type="ChEBI" id="CHEBI:58289"/>
        <dbReference type="ChEBI" id="CHEBI:58702"/>
        <dbReference type="EC" id="4.2.1.11"/>
    </reaction>
</comment>
<comment type="cofactor">
    <cofactor evidence="1">
        <name>Mg(2+)</name>
        <dbReference type="ChEBI" id="CHEBI:18420"/>
    </cofactor>
    <text evidence="1">Binds a second Mg(2+) ion via substrate during catalysis.</text>
</comment>
<comment type="pathway">
    <text evidence="1">Carbohydrate degradation; glycolysis; pyruvate from D-glyceraldehyde 3-phosphate: step 4/5.</text>
</comment>
<comment type="subcellular location">
    <subcellularLocation>
        <location evidence="1">Cytoplasm</location>
    </subcellularLocation>
    <subcellularLocation>
        <location evidence="1">Secreted</location>
    </subcellularLocation>
    <subcellularLocation>
        <location evidence="1">Cell surface</location>
    </subcellularLocation>
    <text evidence="1">Fractions of enolase are present in both the cytoplasm and on the cell surface.</text>
</comment>
<comment type="similarity">
    <text evidence="1">Belongs to the enolase family.</text>
</comment>
<name>ENO_TREPA</name>
<gene>
    <name evidence="1" type="primary">eno</name>
    <name type="ordered locus">TP_0817</name>
</gene>
<evidence type="ECO:0000255" key="1">
    <source>
        <dbReference type="HAMAP-Rule" id="MF_00318"/>
    </source>
</evidence>
<reference key="1">
    <citation type="journal article" date="1997" name="DNA Seq.">
        <title>Nucleotide sequence of the Treponema pallidum eno gene.</title>
        <authorList>
            <person name="Stamm L.V."/>
            <person name="Young N.R."/>
        </authorList>
    </citation>
    <scope>NUCLEOTIDE SEQUENCE [GENOMIC DNA]</scope>
    <source>
        <strain>Nichols</strain>
    </source>
</reference>
<reference key="2">
    <citation type="journal article" date="1998" name="Science">
        <title>Complete genome sequence of Treponema pallidum, the syphilis spirochete.</title>
        <authorList>
            <person name="Fraser C.M."/>
            <person name="Norris S.J."/>
            <person name="Weinstock G.M."/>
            <person name="White O."/>
            <person name="Sutton G.G."/>
            <person name="Dodson R.J."/>
            <person name="Gwinn M.L."/>
            <person name="Hickey E.K."/>
            <person name="Clayton R.A."/>
            <person name="Ketchum K.A."/>
            <person name="Sodergren E."/>
            <person name="Hardham J.M."/>
            <person name="McLeod M.P."/>
            <person name="Salzberg S.L."/>
            <person name="Peterson J.D."/>
            <person name="Khalak H.G."/>
            <person name="Richardson D.L."/>
            <person name="Howell J.K."/>
            <person name="Chidambaram M."/>
            <person name="Utterback T.R."/>
            <person name="McDonald L.A."/>
            <person name="Artiach P."/>
            <person name="Bowman C."/>
            <person name="Cotton M.D."/>
            <person name="Fujii C."/>
            <person name="Garland S.A."/>
            <person name="Hatch B."/>
            <person name="Horst K."/>
            <person name="Roberts K.M."/>
            <person name="Sandusky M."/>
            <person name="Weidman J.F."/>
            <person name="Smith H.O."/>
            <person name="Venter J.C."/>
        </authorList>
    </citation>
    <scope>NUCLEOTIDE SEQUENCE [LARGE SCALE GENOMIC DNA]</scope>
    <source>
        <strain>Nichols</strain>
    </source>
</reference>
<accession>P74934</accession>
<organism>
    <name type="scientific">Treponema pallidum (strain Nichols)</name>
    <dbReference type="NCBI Taxonomy" id="243276"/>
    <lineage>
        <taxon>Bacteria</taxon>
        <taxon>Pseudomonadati</taxon>
        <taxon>Spirochaetota</taxon>
        <taxon>Spirochaetia</taxon>
        <taxon>Spirochaetales</taxon>
        <taxon>Treponemataceae</taxon>
        <taxon>Treponema</taxon>
    </lineage>
</organism>
<sequence length="432" mass="46771">MSDIACIEAREIIDSRGNPTVEVDVSLSDGSFGRACVPSGASTGEFEALEMRDGDKERYNGKGVLKAVGTVNTLIADTLEGMDALNQGEIDHAMRNLDGTDNKSKLGANAMLGVSMACARAAADFLGVPLYRYLGGVHTFRMPVPMANIINGGKHSDNKIDFQEFMVMPIGAASMREAVRMTAEVFHALKGLLAADGKATSVGDEGGFAPDLDNEQALEYIMKAIAKAGLAPRKDVCIALDCASSELFDEGDRRGYKFWKSNPGKLFTAQEMIDLYKKWIATYPIVSIEDPLDQNDWAGYVQLTKELGDKVQIVGDDFFVTNTGRLARGIKEGSCNSILIKLNQIGTVTETVDAVRMAQNAGYAAVISHRSGETEDAFIADLAVALETGQIKTGSMSRSDRVAKYNQLMRIEEELGAQARYYGAKTFERFGC</sequence>
<protein>
    <recommendedName>
        <fullName evidence="1">Enolase</fullName>
        <ecNumber evidence="1">4.2.1.11</ecNumber>
    </recommendedName>
    <alternativeName>
        <fullName evidence="1">2-phospho-D-glycerate hydro-lyase</fullName>
    </alternativeName>
    <alternativeName>
        <fullName evidence="1">2-phosphoglycerate dehydratase</fullName>
    </alternativeName>
</protein>
<feature type="chain" id="PRO_0000133999" description="Enolase">
    <location>
        <begin position="1"/>
        <end position="432"/>
    </location>
</feature>
<feature type="active site" description="Proton donor" evidence="1">
    <location>
        <position position="205"/>
    </location>
</feature>
<feature type="active site" description="Proton acceptor" evidence="1">
    <location>
        <position position="341"/>
    </location>
</feature>
<feature type="binding site" evidence="1">
    <location>
        <position position="163"/>
    </location>
    <ligand>
        <name>(2R)-2-phosphoglycerate</name>
        <dbReference type="ChEBI" id="CHEBI:58289"/>
    </ligand>
</feature>
<feature type="binding site" evidence="1">
    <location>
        <position position="241"/>
    </location>
    <ligand>
        <name>Mg(2+)</name>
        <dbReference type="ChEBI" id="CHEBI:18420"/>
    </ligand>
</feature>
<feature type="binding site" evidence="1">
    <location>
        <position position="289"/>
    </location>
    <ligand>
        <name>Mg(2+)</name>
        <dbReference type="ChEBI" id="CHEBI:18420"/>
    </ligand>
</feature>
<feature type="binding site" evidence="1">
    <location>
        <position position="316"/>
    </location>
    <ligand>
        <name>Mg(2+)</name>
        <dbReference type="ChEBI" id="CHEBI:18420"/>
    </ligand>
</feature>
<feature type="binding site" evidence="1">
    <location>
        <position position="341"/>
    </location>
    <ligand>
        <name>(2R)-2-phosphoglycerate</name>
        <dbReference type="ChEBI" id="CHEBI:58289"/>
    </ligand>
</feature>
<feature type="binding site" evidence="1">
    <location>
        <position position="370"/>
    </location>
    <ligand>
        <name>(2R)-2-phosphoglycerate</name>
        <dbReference type="ChEBI" id="CHEBI:58289"/>
    </ligand>
</feature>
<feature type="binding site" evidence="1">
    <location>
        <position position="371"/>
    </location>
    <ligand>
        <name>(2R)-2-phosphoglycerate</name>
        <dbReference type="ChEBI" id="CHEBI:58289"/>
    </ligand>
</feature>
<feature type="binding site" evidence="1">
    <location>
        <position position="392"/>
    </location>
    <ligand>
        <name>(2R)-2-phosphoglycerate</name>
        <dbReference type="ChEBI" id="CHEBI:58289"/>
    </ligand>
</feature>
<keyword id="KW-0963">Cytoplasm</keyword>
<keyword id="KW-0324">Glycolysis</keyword>
<keyword id="KW-0456">Lyase</keyword>
<keyword id="KW-0460">Magnesium</keyword>
<keyword id="KW-0479">Metal-binding</keyword>
<keyword id="KW-1185">Reference proteome</keyword>
<keyword id="KW-0964">Secreted</keyword>